<protein>
    <recommendedName>
        <fullName evidence="2">Small ribosomal subunit protein uS7c</fullName>
    </recommendedName>
    <alternativeName>
        <fullName>30S ribosomal protein S7, chloroplastic</fullName>
    </alternativeName>
</protein>
<dbReference type="EMBL" id="AY147468">
    <property type="protein sequence ID" value="AAN32015.1"/>
    <property type="molecule type" value="Genomic_DNA"/>
</dbReference>
<dbReference type="SMR" id="Q67II8"/>
<dbReference type="GO" id="GO:0009507">
    <property type="term" value="C:chloroplast"/>
    <property type="evidence" value="ECO:0007669"/>
    <property type="project" value="UniProtKB-SubCell"/>
</dbReference>
<dbReference type="GO" id="GO:0015935">
    <property type="term" value="C:small ribosomal subunit"/>
    <property type="evidence" value="ECO:0007669"/>
    <property type="project" value="InterPro"/>
</dbReference>
<dbReference type="GO" id="GO:0019843">
    <property type="term" value="F:rRNA binding"/>
    <property type="evidence" value="ECO:0007669"/>
    <property type="project" value="UniProtKB-UniRule"/>
</dbReference>
<dbReference type="GO" id="GO:0003735">
    <property type="term" value="F:structural constituent of ribosome"/>
    <property type="evidence" value="ECO:0007669"/>
    <property type="project" value="InterPro"/>
</dbReference>
<dbReference type="GO" id="GO:0006412">
    <property type="term" value="P:translation"/>
    <property type="evidence" value="ECO:0007669"/>
    <property type="project" value="UniProtKB-UniRule"/>
</dbReference>
<dbReference type="CDD" id="cd14871">
    <property type="entry name" value="uS7_Chloroplast"/>
    <property type="match status" value="1"/>
</dbReference>
<dbReference type="FunFam" id="1.10.455.10:FF:000001">
    <property type="entry name" value="30S ribosomal protein S7"/>
    <property type="match status" value="1"/>
</dbReference>
<dbReference type="Gene3D" id="1.10.455.10">
    <property type="entry name" value="Ribosomal protein S7 domain"/>
    <property type="match status" value="1"/>
</dbReference>
<dbReference type="HAMAP" id="MF_00480_B">
    <property type="entry name" value="Ribosomal_uS7_B"/>
    <property type="match status" value="1"/>
</dbReference>
<dbReference type="InterPro" id="IPR000235">
    <property type="entry name" value="Ribosomal_uS7"/>
</dbReference>
<dbReference type="InterPro" id="IPR005717">
    <property type="entry name" value="Ribosomal_uS7_bac/org-type"/>
</dbReference>
<dbReference type="InterPro" id="IPR020606">
    <property type="entry name" value="Ribosomal_uS7_CS"/>
</dbReference>
<dbReference type="InterPro" id="IPR023798">
    <property type="entry name" value="Ribosomal_uS7_dom"/>
</dbReference>
<dbReference type="InterPro" id="IPR036823">
    <property type="entry name" value="Ribosomal_uS7_dom_sf"/>
</dbReference>
<dbReference type="NCBIfam" id="TIGR01029">
    <property type="entry name" value="rpsG_bact"/>
    <property type="match status" value="1"/>
</dbReference>
<dbReference type="PANTHER" id="PTHR11205">
    <property type="entry name" value="RIBOSOMAL PROTEIN S7"/>
    <property type="match status" value="1"/>
</dbReference>
<dbReference type="Pfam" id="PF00177">
    <property type="entry name" value="Ribosomal_S7"/>
    <property type="match status" value="1"/>
</dbReference>
<dbReference type="PIRSF" id="PIRSF002122">
    <property type="entry name" value="RPS7p_RPS7a_RPS5e_RPS7o"/>
    <property type="match status" value="1"/>
</dbReference>
<dbReference type="SUPFAM" id="SSF47973">
    <property type="entry name" value="Ribosomal protein S7"/>
    <property type="match status" value="1"/>
</dbReference>
<dbReference type="PROSITE" id="PS00052">
    <property type="entry name" value="RIBOSOMAL_S7"/>
    <property type="match status" value="1"/>
</dbReference>
<keyword id="KW-0150">Chloroplast</keyword>
<keyword id="KW-0934">Plastid</keyword>
<keyword id="KW-0687">Ribonucleoprotein</keyword>
<keyword id="KW-0689">Ribosomal protein</keyword>
<keyword id="KW-0694">RNA-binding</keyword>
<keyword id="KW-0699">rRNA-binding</keyword>
<organism>
    <name type="scientific">Typha angustifolia</name>
    <name type="common">Narrow leaf cattail</name>
    <dbReference type="NCBI Taxonomy" id="59011"/>
    <lineage>
        <taxon>Eukaryota</taxon>
        <taxon>Viridiplantae</taxon>
        <taxon>Streptophyta</taxon>
        <taxon>Embryophyta</taxon>
        <taxon>Tracheophyta</taxon>
        <taxon>Spermatophyta</taxon>
        <taxon>Magnoliopsida</taxon>
        <taxon>Liliopsida</taxon>
        <taxon>Poales</taxon>
        <taxon>Typhaceae</taxon>
        <taxon>Typha</taxon>
    </lineage>
</organism>
<accession>Q67II8</accession>
<feature type="chain" id="PRO_0000124514" description="Small ribosomal subunit protein uS7c">
    <location>
        <begin position="1"/>
        <end position="155"/>
    </location>
</feature>
<evidence type="ECO:0000250" key="1"/>
<evidence type="ECO:0000305" key="2"/>
<geneLocation type="chloroplast"/>
<proteinExistence type="inferred from homology"/>
<sequence>MSRRGTAEEKTAKSDPIYRNRLVNMLVNRIMKHGKKSLAYQIIYRAVKKIQQKTETNPLSVLRQAIRGVTPDIAVKARRVGGSTHQVPIEIGSTQGKALAIRWLLGASRKRPGRNMAFKLSSELVDAAKGSGDAIRKKEETHRMAEANRAFAHFR</sequence>
<comment type="function">
    <text evidence="1">One of the primary rRNA binding proteins, it binds directly to 16S rRNA where it nucleates assembly of the head domain of the 30S subunit.</text>
</comment>
<comment type="subunit">
    <text>Part of the 30S ribosomal subunit.</text>
</comment>
<comment type="subcellular location">
    <subcellularLocation>
        <location>Plastid</location>
        <location>Chloroplast</location>
    </subcellularLocation>
</comment>
<comment type="similarity">
    <text evidence="2">Belongs to the universal ribosomal protein uS7 family.</text>
</comment>
<gene>
    <name type="primary">rps7</name>
</gene>
<name>RR7_TYPAN</name>
<reference key="1">
    <citation type="submission" date="2002-09" db="EMBL/GenBank/DDBJ databases">
        <title>Phylogenetic relationships among the major lineages of Asparagales based on a large chloroplast data set.</title>
        <authorList>
            <person name="McPherson M.A."/>
            <person name="Rai H.S."/>
            <person name="Wong W.A."/>
            <person name="Graham S.W."/>
        </authorList>
    </citation>
    <scope>NUCLEOTIDE SEQUENCE [GENOMIC DNA]</scope>
</reference>